<keyword id="KW-0002">3D-structure</keyword>
<keyword id="KW-0012">Acyltransferase</keyword>
<keyword id="KW-0216">Detoxification</keyword>
<keyword id="KW-1185">Reference proteome</keyword>
<keyword id="KW-0808">Transferase</keyword>
<accession>Q589Y0</accession>
<protein>
    <recommendedName>
        <fullName evidence="6">Phenolic glucoside malonyltransferase 1</fullName>
        <shortName evidence="4 5">NtMaT1</shortName>
        <ecNumber evidence="2">2.3.1.-</ecNumber>
        <ecNumber evidence="2">2.3.1.116</ecNumber>
    </recommendedName>
    <alternativeName>
        <fullName evidence="5">Flavonol/naphthol glucoside malonyltransferase 1</fullName>
    </alternativeName>
    <alternativeName>
        <fullName evidence="4">Phenolic glucoside-6'-O-malonyltransferase 1</fullName>
    </alternativeName>
</protein>
<dbReference type="EC" id="2.3.1.-" evidence="2"/>
<dbReference type="EC" id="2.3.1.116" evidence="2"/>
<dbReference type="EMBL" id="AB176525">
    <property type="protein sequence ID" value="BAD93691.1"/>
    <property type="molecule type" value="mRNA"/>
</dbReference>
<dbReference type="RefSeq" id="NP_001312260.1">
    <property type="nucleotide sequence ID" value="NM_001325331.1"/>
</dbReference>
<dbReference type="PDB" id="2XR7">
    <property type="method" value="X-ray"/>
    <property type="resolution" value="3.10 A"/>
    <property type="chains" value="A=1-453"/>
</dbReference>
<dbReference type="PDBsum" id="2XR7"/>
<dbReference type="SMR" id="Q589Y0"/>
<dbReference type="STRING" id="4097.Q589Y0"/>
<dbReference type="PaxDb" id="4097-Q589Y0"/>
<dbReference type="GeneID" id="107782063"/>
<dbReference type="KEGG" id="nta:107782063"/>
<dbReference type="OMA" id="PHAPFLC"/>
<dbReference type="OrthoDB" id="1862401at2759"/>
<dbReference type="EvolutionaryTrace" id="Q589Y0"/>
<dbReference type="Proteomes" id="UP000084051">
    <property type="component" value="Unplaced"/>
</dbReference>
<dbReference type="GO" id="GO:0047165">
    <property type="term" value="F:flavonol-3-O-beta-glucoside O-malonyltransferase activity"/>
    <property type="evidence" value="ECO:0000314"/>
    <property type="project" value="UniProtKB"/>
</dbReference>
<dbReference type="GO" id="GO:0016420">
    <property type="term" value="F:malonyltransferase activity"/>
    <property type="evidence" value="ECO:0000314"/>
    <property type="project" value="UniProtKB"/>
</dbReference>
<dbReference type="GO" id="GO:0009636">
    <property type="term" value="P:response to toxic substance"/>
    <property type="evidence" value="ECO:0000314"/>
    <property type="project" value="UniProtKB"/>
</dbReference>
<dbReference type="GO" id="GO:0006805">
    <property type="term" value="P:xenobiotic metabolic process"/>
    <property type="evidence" value="ECO:0000314"/>
    <property type="project" value="UniProtKB"/>
</dbReference>
<dbReference type="FunFam" id="3.30.559.10:FF:000035">
    <property type="entry name" value="Phenolic glucoside malonyltransferase 1"/>
    <property type="match status" value="1"/>
</dbReference>
<dbReference type="FunFam" id="3.30.559.10:FF:000046">
    <property type="entry name" value="Phenolic glucoside malonyltransferase 1"/>
    <property type="match status" value="1"/>
</dbReference>
<dbReference type="Gene3D" id="3.30.559.10">
    <property type="entry name" value="Chloramphenicol acetyltransferase-like domain"/>
    <property type="match status" value="2"/>
</dbReference>
<dbReference type="InterPro" id="IPR023213">
    <property type="entry name" value="CAT-like_dom_sf"/>
</dbReference>
<dbReference type="InterPro" id="IPR051504">
    <property type="entry name" value="Plant_metabolite_acyltrans"/>
</dbReference>
<dbReference type="PANTHER" id="PTHR31625">
    <property type="match status" value="1"/>
</dbReference>
<dbReference type="Pfam" id="PF02458">
    <property type="entry name" value="Transferase"/>
    <property type="match status" value="1"/>
</dbReference>
<evidence type="ECO:0000250" key="1">
    <source>
        <dbReference type="UniProtKB" id="Q8W1W9"/>
    </source>
</evidence>
<evidence type="ECO:0000269" key="2">
    <source>
    </source>
</evidence>
<evidence type="ECO:0000269" key="3">
    <source>
    </source>
</evidence>
<evidence type="ECO:0000303" key="4">
    <source>
    </source>
</evidence>
<evidence type="ECO:0000303" key="5">
    <source>
    </source>
</evidence>
<evidence type="ECO:0000305" key="6"/>
<evidence type="ECO:0000305" key="7">
    <source>
    </source>
</evidence>
<evidence type="ECO:0000312" key="8">
    <source>
        <dbReference type="EMBL" id="BAD93691.1"/>
    </source>
</evidence>
<evidence type="ECO:0000312" key="9">
    <source>
        <dbReference type="PDB" id="2XR7"/>
    </source>
</evidence>
<evidence type="ECO:0000312" key="10">
    <source>
        <dbReference type="Proteomes" id="UP000084051"/>
    </source>
</evidence>
<evidence type="ECO:0007744" key="11">
    <source>
        <dbReference type="PDB" id="2XR7"/>
    </source>
</evidence>
<evidence type="ECO:0007829" key="12">
    <source>
        <dbReference type="PDB" id="2XR7"/>
    </source>
</evidence>
<feature type="chain" id="PRO_0000446371" description="Phenolic glucoside malonyltransferase 1">
    <location>
        <begin position="1"/>
        <end position="453"/>
    </location>
</feature>
<feature type="short sequence motif" description="HXXXD motif" evidence="7">
    <location>
        <begin position="165"/>
        <end position="169"/>
    </location>
</feature>
<feature type="short sequence motif" description="DFGWG motif" evidence="7">
    <location>
        <begin position="394"/>
        <end position="398"/>
    </location>
</feature>
<feature type="active site" description="Proton acceptor" evidence="1">
    <location>
        <position position="165"/>
    </location>
</feature>
<feature type="active site" description="Proton acceptor" evidence="1">
    <location>
        <position position="394"/>
    </location>
</feature>
<feature type="binding site" evidence="3 9">
    <location>
        <position position="254"/>
    </location>
    <ligand>
        <name>malonyl-CoA</name>
        <dbReference type="ChEBI" id="CHEBI:57384"/>
    </ligand>
</feature>
<feature type="binding site" evidence="3 9">
    <location>
        <position position="266"/>
    </location>
    <ligand>
        <name>malonyl-CoA</name>
        <dbReference type="ChEBI" id="CHEBI:57384"/>
    </ligand>
</feature>
<feature type="binding site" evidence="3 9">
    <location>
        <begin position="268"/>
        <end position="269"/>
    </location>
    <ligand>
        <name>malonyl-CoA</name>
        <dbReference type="ChEBI" id="CHEBI:57384"/>
    </ligand>
</feature>
<feature type="strand" evidence="12">
    <location>
        <begin position="3"/>
        <end position="8"/>
    </location>
</feature>
<feature type="strand" evidence="12">
    <location>
        <begin position="18"/>
        <end position="23"/>
    </location>
</feature>
<feature type="helix" evidence="12">
    <location>
        <begin position="26"/>
        <end position="29"/>
    </location>
</feature>
<feature type="helix" evidence="12">
    <location>
        <begin position="30"/>
        <end position="33"/>
    </location>
</feature>
<feature type="strand" evidence="12">
    <location>
        <begin position="37"/>
        <end position="44"/>
    </location>
</feature>
<feature type="helix" evidence="12">
    <location>
        <begin position="50"/>
        <end position="54"/>
    </location>
</feature>
<feature type="helix" evidence="12">
    <location>
        <begin position="56"/>
        <end position="68"/>
    </location>
</feature>
<feature type="helix" evidence="12">
    <location>
        <begin position="72"/>
        <end position="75"/>
    </location>
</feature>
<feature type="strand" evidence="12">
    <location>
        <begin position="79"/>
        <end position="83"/>
    </location>
</feature>
<feature type="strand" evidence="12">
    <location>
        <begin position="89"/>
        <end position="93"/>
    </location>
</feature>
<feature type="strand" evidence="12">
    <location>
        <begin position="99"/>
        <end position="104"/>
    </location>
</feature>
<feature type="helix" evidence="12">
    <location>
        <begin position="109"/>
        <end position="112"/>
    </location>
</feature>
<feature type="helix" evidence="12">
    <location>
        <begin position="120"/>
        <end position="126"/>
    </location>
</feature>
<feature type="strand" evidence="12">
    <location>
        <begin position="134"/>
        <end position="136"/>
    </location>
</feature>
<feature type="strand" evidence="12">
    <location>
        <begin position="139"/>
        <end position="141"/>
    </location>
</feature>
<feature type="strand" evidence="12">
    <location>
        <begin position="145"/>
        <end position="152"/>
    </location>
</feature>
<feature type="turn" evidence="12">
    <location>
        <begin position="153"/>
        <end position="155"/>
    </location>
</feature>
<feature type="strand" evidence="12">
    <location>
        <begin position="156"/>
        <end position="163"/>
    </location>
</feature>
<feature type="turn" evidence="12">
    <location>
        <begin position="165"/>
        <end position="167"/>
    </location>
</feature>
<feature type="helix" evidence="12">
    <location>
        <begin position="171"/>
        <end position="185"/>
    </location>
</feature>
<feature type="turn" evidence="12">
    <location>
        <begin position="186"/>
        <end position="188"/>
    </location>
</feature>
<feature type="helix" evidence="12">
    <location>
        <begin position="190"/>
        <end position="192"/>
    </location>
</feature>
<feature type="helix" evidence="12">
    <location>
        <begin position="195"/>
        <end position="197"/>
    </location>
</feature>
<feature type="strand" evidence="12">
    <location>
        <begin position="204"/>
        <end position="206"/>
    </location>
</feature>
<feature type="helix" evidence="12">
    <location>
        <begin position="212"/>
        <end position="215"/>
    </location>
</feature>
<feature type="turn" evidence="12">
    <location>
        <begin position="216"/>
        <end position="219"/>
    </location>
</feature>
<feature type="helix" evidence="12">
    <location>
        <begin position="220"/>
        <end position="222"/>
    </location>
</feature>
<feature type="turn" evidence="12">
    <location>
        <begin position="224"/>
        <end position="226"/>
    </location>
</feature>
<feature type="strand" evidence="12">
    <location>
        <begin position="241"/>
        <end position="245"/>
    </location>
</feature>
<feature type="helix" evidence="12">
    <location>
        <begin position="247"/>
        <end position="260"/>
    </location>
</feature>
<feature type="helix" evidence="12">
    <location>
        <begin position="269"/>
        <end position="287"/>
    </location>
</feature>
<feature type="strand" evidence="12">
    <location>
        <begin position="296"/>
        <end position="303"/>
    </location>
</feature>
<feature type="strand" evidence="12">
    <location>
        <begin position="310"/>
        <end position="312"/>
    </location>
</feature>
<feature type="strand" evidence="12">
    <location>
        <begin position="325"/>
        <end position="331"/>
    </location>
</feature>
<feature type="helix" evidence="12">
    <location>
        <begin position="332"/>
        <end position="335"/>
    </location>
</feature>
<feature type="strand" evidence="12">
    <location>
        <begin position="337"/>
        <end position="339"/>
    </location>
</feature>
<feature type="helix" evidence="12">
    <location>
        <begin position="340"/>
        <end position="352"/>
    </location>
</feature>
<feature type="strand" evidence="12">
    <location>
        <begin position="355"/>
        <end position="357"/>
    </location>
</feature>
<feature type="helix" evidence="12">
    <location>
        <begin position="359"/>
        <end position="363"/>
    </location>
</feature>
<feature type="helix" evidence="12">
    <location>
        <begin position="376"/>
        <end position="378"/>
    </location>
</feature>
<feature type="strand" evidence="12">
    <location>
        <begin position="379"/>
        <end position="382"/>
    </location>
</feature>
<feature type="helix" evidence="12">
    <location>
        <begin position="390"/>
        <end position="392"/>
    </location>
</feature>
<feature type="strand" evidence="12">
    <location>
        <begin position="401"/>
        <end position="405"/>
    </location>
</feature>
<feature type="helix" evidence="12">
    <location>
        <begin position="406"/>
        <end position="408"/>
    </location>
</feature>
<feature type="strand" evidence="12">
    <location>
        <begin position="415"/>
        <end position="420"/>
    </location>
</feature>
<feature type="strand" evidence="12">
    <location>
        <begin position="422"/>
        <end position="424"/>
    </location>
</feature>
<feature type="strand" evidence="12">
    <location>
        <begin position="428"/>
        <end position="432"/>
    </location>
</feature>
<feature type="helix" evidence="12">
    <location>
        <begin position="436"/>
        <end position="450"/>
    </location>
</feature>
<organism evidence="8">
    <name type="scientific">Nicotiana tabacum</name>
    <name type="common">Common tobacco</name>
    <dbReference type="NCBI Taxonomy" id="4097"/>
    <lineage>
        <taxon>Eukaryota</taxon>
        <taxon>Viridiplantae</taxon>
        <taxon>Streptophyta</taxon>
        <taxon>Embryophyta</taxon>
        <taxon>Tracheophyta</taxon>
        <taxon>Spermatophyta</taxon>
        <taxon>Magnoliopsida</taxon>
        <taxon>eudicotyledons</taxon>
        <taxon>Gunneridae</taxon>
        <taxon>Pentapetalae</taxon>
        <taxon>asterids</taxon>
        <taxon>lamiids</taxon>
        <taxon>Solanales</taxon>
        <taxon>Solanaceae</taxon>
        <taxon>Nicotianoideae</taxon>
        <taxon>Nicotianeae</taxon>
        <taxon>Nicotiana</taxon>
    </lineage>
</organism>
<sequence>MASVIEQCQVVPSPGSATELTLPLTYFDHVWLAFHRMRRILFYKLPISRPDFVQTIIPTLKDSLSLTLKYYLPLAGNVACPQDWSGYPELRYVTGNSVSVIFSESDMDFNYLIGYHPRNTKDFYHFVPQLAEPKDAPGVQLAPVLAIQVTLFPNHGISIGFTNHHVAGDGATIVKFVRAWALLNKFGGDEQFLANEFIPFYDRSVIKDPNGVGMSIWNEMKKYKHMMKMSDVVTPPDKVRGTFIITRHDIGKLKNLVLTRRPKLTHVTSFTVTCAYVWTCIIKSEAATGEEIDENGMEFFGCAADCRAQFNPPLPPSYFGNALVGYVARTRQVDLAGKEGFTIAVELIGEAIRKRMKDEEWILSGSWFKEYDKVDAKRSLSVAGSPKLDLYAADFGWGRPEKLEFVSIDNDDGISMSLSKSKDSDGDLEIGLSLSKTRMNAFAAMFTHGISFL</sequence>
<reference evidence="8" key="1">
    <citation type="journal article" date="2005" name="Plant J.">
        <title>Molecular cloning, characterization, and downregulation of an acyltransferase that catalyzes the malonylation of flavonoid and naphthol glucosides in tobacco cells.</title>
        <authorList>
            <person name="Taguchi G."/>
            <person name="Shitchi Y."/>
            <person name="Shirasawa S."/>
            <person name="Yamamoto H."/>
            <person name="Hayashida N."/>
        </authorList>
    </citation>
    <scope>NUCLEOTIDE SEQUENCE [MRNA]</scope>
    <scope>FUNCTION</scope>
    <scope>CATALYTIC ACTIVITY</scope>
    <scope>BIOPHYSICOCHEMICAL PROPERTIES</scope>
    <scope>SUBSTRATE SPECIFICITY</scope>
    <scope>TISSUE SPECIFICITY</scope>
    <scope>DEVELOPMENTAL STAGE</scope>
    <source>
        <strain evidence="4">cv. Bright Yellow</strain>
        <tissue evidence="4">Callus</tissue>
    </source>
</reference>
<reference evidence="10" key="2">
    <citation type="journal article" date="2014" name="Nat. Commun.">
        <title>The tobacco genome sequence and its comparison with those of tomato and potato.</title>
        <authorList>
            <person name="Sierro N."/>
            <person name="Battey J.N."/>
            <person name="Ouadi S."/>
            <person name="Bakaher N."/>
            <person name="Bovet L."/>
            <person name="Willig A."/>
            <person name="Goepfert S."/>
            <person name="Peitsch M.C."/>
            <person name="Ivanov N.V."/>
        </authorList>
    </citation>
    <scope>NUCLEOTIDE SEQUENCE [LARGE SCALE GENOMIC DNA]</scope>
    <source>
        <strain evidence="10">cv. TN90</strain>
    </source>
</reference>
<reference evidence="11" key="3">
    <citation type="journal article" date="2012" name="Planta">
        <title>Structural basis for modification of flavonol and naphthol glucoconjugates by Nicotiana tabacum malonyltransferase (NtMaT1).</title>
        <authorList>
            <person name="Manjasetty B.A."/>
            <person name="Yu X.H."/>
            <person name="Panjikar S."/>
            <person name="Taguchi G."/>
            <person name="Chance M.R."/>
            <person name="Liu C.J."/>
        </authorList>
    </citation>
    <scope>X-RAY CRYSTALLOGRAPHY (3.10 ANGSTROMS) IN COMPLEX WITH MALONYL-COA</scope>
    <scope>SUBUNIT</scope>
    <scope>MOTIF</scope>
</reference>
<comment type="function">
    <text evidence="2">Malonyltransferase with broad substrate specificity acting on phenolic glucosides including xenobiotic naphthols. Has activity against flavonoid 7-O-glucosides, flavonoid 3-O-glucosides and naphthol glucosides, and to a lesser extent against coumarin glucosides in vitro. Prefers malonyl-CoA as an acyl donor, but also active with succinyl-CoA and methylmalonyl-CoA, but not with acetyl-CoA.</text>
</comment>
<comment type="catalytic activity">
    <reaction evidence="2">
        <text>a flavonol 3-O-beta-D-glucoside + malonyl-CoA = a flavonol 3-O-(6-O-malonyl-beta-D-glucoside) + CoA</text>
        <dbReference type="Rhea" id="RHEA:20085"/>
        <dbReference type="ChEBI" id="CHEBI:16816"/>
        <dbReference type="ChEBI" id="CHEBI:57287"/>
        <dbReference type="ChEBI" id="CHEBI:57384"/>
        <dbReference type="ChEBI" id="CHEBI:58034"/>
        <dbReference type="EC" id="2.3.1.116"/>
    </reaction>
    <physiologicalReaction direction="left-to-right" evidence="2">
        <dbReference type="Rhea" id="RHEA:20086"/>
    </physiologicalReaction>
</comment>
<comment type="catalytic activity">
    <reaction evidence="2">
        <text>a flavonol 7-O-beta-D-glucoside + malonyl-CoA = a flavonol 7-O-(6-O-malonyl-beta-D-glucoside) + CoA</text>
        <dbReference type="Rhea" id="RHEA:58796"/>
        <dbReference type="ChEBI" id="CHEBI:52144"/>
        <dbReference type="ChEBI" id="CHEBI:57287"/>
        <dbReference type="ChEBI" id="CHEBI:57384"/>
        <dbReference type="ChEBI" id="CHEBI:142805"/>
    </reaction>
    <physiologicalReaction direction="left-to-right" evidence="2">
        <dbReference type="Rhea" id="RHEA:58797"/>
    </physiologicalReaction>
</comment>
<comment type="biophysicochemical properties">
    <kinetics>
        <KM evidence="2">26.5 uM for kaempferol 7-O-glucoside (at 30 degrees Celsius)</KM>
        <KM evidence="2">80.6 uM for kaempferol 3-O-glucoside (at 30 degrees Celsius)</KM>
        <KM evidence="2">179 uM for 2-naphthol glucoside (at 30 degrees Celsius)</KM>
        <KM evidence="2">5.5 uM for malonyl-CoA (at 30 degrees Celsius)</KM>
        <KM evidence="2">26.7 uM for succinyl-CoA (at 30 degrees Celsius)</KM>
        <Vmax evidence="2">216.0 nmol/sec/mg enzyme toward kaempferol 7-O-glucoside (at 30 degrees Celsius)</Vmax>
        <Vmax evidence="2">134.0 nmol/sec/mg enzyme toward kaempferol 3-O-glucoside (at 30 degrees Celsius)</Vmax>
        <Vmax evidence="2">128.0 nmol/sec/mg enzyme toward 2-naphthol glucoside (at 30 degrees Celsius)</Vmax>
        <Vmax evidence="2">159.0 nmol/sec/mg enzyme toward malonyl-CoA (at 30 degrees Celsius)</Vmax>
        <Vmax evidence="2">183.0 nmol/sec/mg enzyme toward succinyl-CoA (at 30 degrees Celsius)</Vmax>
        <text evidence="2">kcat is 11.0 sec(-1) for kaempferol 7-O-glucoside. kcat is 6.8 sec(-1) for kaempferol 3-O-glucoside. kcat is 6.5 sec(-1) for 2-naphthol glucoside. kcat is 8.0 sec(-1) for malonyl-CoA. kcat is 9.3 sec(-1) for succinyl-CoA.</text>
    </kinetics>
    <phDependence>
        <text evidence="2">Optimum pH is 8.0-8.5.</text>
    </phDependence>
    <temperatureDependence>
        <text evidence="2">Stable below 40 degrees Celsius and pH 8.0 for 30 minutes.</text>
    </temperatureDependence>
</comment>
<comment type="subunit">
    <text evidence="3">Monomer.</text>
</comment>
<comment type="tissue specificity">
    <text evidence="2">Highly expressed in flower. Also expressed in flower bud, stem, root and leaf.</text>
</comment>
<comment type="developmental stage">
    <text evidence="2">Expressed in 2-week old seedlings.</text>
</comment>
<comment type="domain">
    <text evidence="7">The HXXXXD motif is essential for acyltransferase activity.</text>
</comment>
<comment type="similarity">
    <text evidence="6">Belongs to the plant acyltransferase family. Phenolic glucoside malonyltransferase subfamily.</text>
</comment>
<name>MAT1_TOBAC</name>
<proteinExistence type="evidence at protein level"/>
<gene>
    <name evidence="8" type="primary">mat1</name>
</gene>